<evidence type="ECO:0000305" key="1"/>
<proteinExistence type="predicted"/>
<sequence length="122" mass="13769">SYFFFIVVPSLLRPEALFKLFFSLVKYFFMISALSKQILFIVLLTLFKSTSAYLWSCIRNSPWLSKKVSISTCKSALRGLFCKSSWRCAKMNGDLVTIVVALVLGDLVTKVVVVVLAEDIVE</sequence>
<dbReference type="EMBL" id="X15648">
    <property type="status" value="NOT_ANNOTATED_CDS"/>
    <property type="molecule type" value="Genomic_DNA"/>
</dbReference>
<dbReference type="PIR" id="JQ0303">
    <property type="entry name" value="JQ0303"/>
</dbReference>
<dbReference type="SMR" id="P22371"/>
<dbReference type="GO" id="GO:0005739">
    <property type="term" value="C:mitochondrion"/>
    <property type="evidence" value="ECO:0007669"/>
    <property type="project" value="UniProtKB-SubCell"/>
</dbReference>
<name>YPC3_CLAPU</name>
<protein>
    <recommendedName>
        <fullName>Uncharacterized 13.8 kDa protein</fullName>
    </recommendedName>
    <alternativeName>
        <fullName>ORF3</fullName>
    </alternativeName>
</protein>
<keyword id="KW-0496">Mitochondrion</keyword>
<keyword id="KW-0614">Plasmid</keyword>
<accession>P22371</accession>
<geneLocation type="mitochondrion"/>
<geneLocation type="plasmid">
    <name>pClK1</name>
</geneLocation>
<feature type="chain" id="PRO_0000196889" description="Uncharacterized 13.8 kDa protein">
    <location>
        <begin position="1"/>
        <end position="122"/>
    </location>
</feature>
<comment type="subcellular location">
    <subcellularLocation>
        <location evidence="1">Mitochondrion</location>
    </subcellularLocation>
</comment>
<organism>
    <name type="scientific">Claviceps purpurea</name>
    <name type="common">Ergot fungus</name>
    <name type="synonym">Sphacelia segetum</name>
    <dbReference type="NCBI Taxonomy" id="5111"/>
    <lineage>
        <taxon>Eukaryota</taxon>
        <taxon>Fungi</taxon>
        <taxon>Dikarya</taxon>
        <taxon>Ascomycota</taxon>
        <taxon>Pezizomycotina</taxon>
        <taxon>Sordariomycetes</taxon>
        <taxon>Hypocreomycetidae</taxon>
        <taxon>Hypocreales</taxon>
        <taxon>Clavicipitaceae</taxon>
        <taxon>Claviceps</taxon>
    </lineage>
</organism>
<reference key="1">
    <citation type="journal article" date="1989" name="Mol. Gen. Genet.">
        <title>The linear mitochondrial plasmid pClK1 of the phytopathogenic fungus Claviceps purpurea may code for a DNA polymerase and an RNA polymerase.</title>
        <authorList>
            <person name="Oeser B."/>
            <person name="Tudzynski P."/>
        </authorList>
    </citation>
    <scope>NUCLEOTIDE SEQUENCE [GENOMIC DNA]</scope>
    <source>
        <strain>K</strain>
    </source>
</reference>